<feature type="chain" id="PRO_0000289953" description="Polynucleotide 5'-hydroxyl-kinase grc3">
    <location>
        <begin position="1"/>
        <end position="831"/>
    </location>
</feature>
<feature type="region of interest" description="Disordered" evidence="3">
    <location>
        <begin position="1"/>
        <end position="161"/>
    </location>
</feature>
<feature type="compositionally biased region" description="Low complexity" evidence="3">
    <location>
        <begin position="8"/>
        <end position="37"/>
    </location>
</feature>
<feature type="compositionally biased region" description="Basic and acidic residues" evidence="3">
    <location>
        <begin position="79"/>
        <end position="97"/>
    </location>
</feature>
<feature type="compositionally biased region" description="Acidic residues" evidence="3">
    <location>
        <begin position="113"/>
        <end position="126"/>
    </location>
</feature>
<feature type="binding site" evidence="2">
    <location>
        <begin position="335"/>
        <end position="342"/>
    </location>
    <ligand>
        <name>ATP</name>
        <dbReference type="ChEBI" id="CHEBI:30616"/>
    </ligand>
</feature>
<gene>
    <name type="primary">grc3</name>
    <name type="ORF">AO090011000497</name>
</gene>
<reference key="1">
    <citation type="journal article" date="2005" name="Nature">
        <title>Genome sequencing and analysis of Aspergillus oryzae.</title>
        <authorList>
            <person name="Machida M."/>
            <person name="Asai K."/>
            <person name="Sano M."/>
            <person name="Tanaka T."/>
            <person name="Kumagai T."/>
            <person name="Terai G."/>
            <person name="Kusumoto K."/>
            <person name="Arima T."/>
            <person name="Akita O."/>
            <person name="Kashiwagi Y."/>
            <person name="Abe K."/>
            <person name="Gomi K."/>
            <person name="Horiuchi H."/>
            <person name="Kitamoto K."/>
            <person name="Kobayashi T."/>
            <person name="Takeuchi M."/>
            <person name="Denning D.W."/>
            <person name="Galagan J.E."/>
            <person name="Nierman W.C."/>
            <person name="Yu J."/>
            <person name="Archer D.B."/>
            <person name="Bennett J.W."/>
            <person name="Bhatnagar D."/>
            <person name="Cleveland T.E."/>
            <person name="Fedorova N.D."/>
            <person name="Gotoh O."/>
            <person name="Horikawa H."/>
            <person name="Hosoyama A."/>
            <person name="Ichinomiya M."/>
            <person name="Igarashi R."/>
            <person name="Iwashita K."/>
            <person name="Juvvadi P.R."/>
            <person name="Kato M."/>
            <person name="Kato Y."/>
            <person name="Kin T."/>
            <person name="Kokubun A."/>
            <person name="Maeda H."/>
            <person name="Maeyama N."/>
            <person name="Maruyama J."/>
            <person name="Nagasaki H."/>
            <person name="Nakajima T."/>
            <person name="Oda K."/>
            <person name="Okada K."/>
            <person name="Paulsen I."/>
            <person name="Sakamoto K."/>
            <person name="Sawano T."/>
            <person name="Takahashi M."/>
            <person name="Takase K."/>
            <person name="Terabayashi Y."/>
            <person name="Wortman J.R."/>
            <person name="Yamada O."/>
            <person name="Yamagata Y."/>
            <person name="Anazawa H."/>
            <person name="Hata Y."/>
            <person name="Koide Y."/>
            <person name="Komori T."/>
            <person name="Koyama Y."/>
            <person name="Minetoki T."/>
            <person name="Suharnan S."/>
            <person name="Tanaka A."/>
            <person name="Isono K."/>
            <person name="Kuhara S."/>
            <person name="Ogasawara N."/>
            <person name="Kikuchi H."/>
        </authorList>
    </citation>
    <scope>NUCLEOTIDE SEQUENCE [LARGE SCALE GENOMIC DNA]</scope>
    <source>
        <strain>ATCC 42149 / RIB 40</strain>
    </source>
</reference>
<proteinExistence type="inferred from homology"/>
<evidence type="ECO:0000250" key="1"/>
<evidence type="ECO:0000255" key="2"/>
<evidence type="ECO:0000256" key="3">
    <source>
        <dbReference type="SAM" id="MobiDB-lite"/>
    </source>
</evidence>
<evidence type="ECO:0000305" key="4"/>
<organism>
    <name type="scientific">Aspergillus oryzae (strain ATCC 42149 / RIB 40)</name>
    <name type="common">Yellow koji mold</name>
    <dbReference type="NCBI Taxonomy" id="510516"/>
    <lineage>
        <taxon>Eukaryota</taxon>
        <taxon>Fungi</taxon>
        <taxon>Dikarya</taxon>
        <taxon>Ascomycota</taxon>
        <taxon>Pezizomycotina</taxon>
        <taxon>Eurotiomycetes</taxon>
        <taxon>Eurotiomycetidae</taxon>
        <taxon>Eurotiales</taxon>
        <taxon>Aspergillaceae</taxon>
        <taxon>Aspergillus</taxon>
        <taxon>Aspergillus subgen. Circumdati</taxon>
    </lineage>
</organism>
<protein>
    <recommendedName>
        <fullName>Polynucleotide 5'-hydroxyl-kinase grc3</fullName>
        <ecNumber>2.7.1.-</ecNumber>
    </recommendedName>
</protein>
<sequence length="831" mass="91669">MKRKAEKQQAAAPAPMSAVAARKARQQQMQAAIAVVKPSQAESVQEPPSKKARRSPEQAAPTPPASGEPQGRTTRSSKRKAESLKVDKLIEKKEKTLSAEYTEQLPVRSSPQEQEDQSSSDEESEEQNPIVGENDAGIAPLRGDVDGYESPADTSGPIQEFPLSKTRLNKSNIIYSDEHTLCVRIKEKMSLVLLGHYDLWVKRGVVSVMGAKLHPSPRLYRVYAPSTHSLPVIKCVSGVDGAAEIEVKSCHSGIYRLRDLSPLYRRIWNGKNTSADKLTLRTSPSSAKRTFSVLYTSADDSFKRHLRPLHLEKQWSSAIKSLSQRGGRLKALICGPKASGKSTFSRYLLNHLLSPAPQTETNYCNTDGVAFLDLDPGQPEFSPMGQVYLAHLRSPVFGPPFSHPSLDSSQEGTIIRAHHIGATSPKEDPDHYVLAAMDLMDRYRALLASYPQCPLIINYPGWIFGLGLEVATWLVRSLGLSDVVYMSEKGPTEVVMPLGQAAQEAMAPLTILPSQPTDFVSRSSAQLRSMQMQSYFHMTRPTEISNPLWLEKPISRTRPFHVHYAGPKQGIKGVMVMGSQIDPDLLQEVLDGSIVAVVAVESPQAILGQNDGPGLTINHPAQPIDADVTMDDSTDTPMEGVPLQDPINPFIDANIVRTPTENLPYLFVGSGSSNPLDPKASRCLGLALVRSIDVSSQRLELVTPIAGSAIRDALEQSHGIVLVRGQLDNPNWAISEDYYAARAEERRYRESLEKLKKNEATTDKEDSIIEPEQQARVSAILRDRIRRASNVPWMTVIEDNSGHQREAAQREKSLWKLRKKAYPGSDSEGDW</sequence>
<accession>Q2U0C4</accession>
<dbReference type="EC" id="2.7.1.-"/>
<dbReference type="EMBL" id="BA000055">
    <property type="protein sequence ID" value="BAE64991.1"/>
    <property type="status" value="ALT_SEQ"/>
    <property type="molecule type" value="Genomic_DNA"/>
</dbReference>
<dbReference type="SMR" id="Q2U0C4"/>
<dbReference type="STRING" id="510516.Q2U0C4"/>
<dbReference type="EnsemblFungi" id="BAE64991">
    <property type="protein sequence ID" value="BAE64991"/>
    <property type="gene ID" value="AO090011000497"/>
</dbReference>
<dbReference type="VEuPathDB" id="FungiDB:AO090011000497"/>
<dbReference type="Proteomes" id="UP000006564">
    <property type="component" value="Chromosome 7"/>
</dbReference>
<dbReference type="GO" id="GO:0005730">
    <property type="term" value="C:nucleolus"/>
    <property type="evidence" value="ECO:0007669"/>
    <property type="project" value="UniProtKB-SubCell"/>
</dbReference>
<dbReference type="GO" id="GO:0005524">
    <property type="term" value="F:ATP binding"/>
    <property type="evidence" value="ECO:0007669"/>
    <property type="project" value="UniProtKB-KW"/>
</dbReference>
<dbReference type="GO" id="GO:0051731">
    <property type="term" value="F:polynucleotide 5'-hydroxyl-kinase activity"/>
    <property type="evidence" value="ECO:0000250"/>
    <property type="project" value="UniProtKB"/>
</dbReference>
<dbReference type="GO" id="GO:0000448">
    <property type="term" value="P:cleavage in ITS2 between 5.8S rRNA and LSU-rRNA of tricistronic rRNA transcript (SSU-rRNA, 5.8S rRNA, LSU-rRNA)"/>
    <property type="evidence" value="ECO:0007669"/>
    <property type="project" value="TreeGrafter"/>
</dbReference>
<dbReference type="GO" id="GO:0006364">
    <property type="term" value="P:rRNA processing"/>
    <property type="evidence" value="ECO:0000250"/>
    <property type="project" value="UniProtKB"/>
</dbReference>
<dbReference type="FunFam" id="3.40.50.300:FF:001156">
    <property type="entry name" value="Polynucleotide 5-hydroxyl-kinase grc3"/>
    <property type="match status" value="1"/>
</dbReference>
<dbReference type="Gene3D" id="3.40.50.300">
    <property type="entry name" value="P-loop containing nucleotide triphosphate hydrolases"/>
    <property type="match status" value="1"/>
</dbReference>
<dbReference type="InterPro" id="IPR045116">
    <property type="entry name" value="Clp1/Grc3"/>
</dbReference>
<dbReference type="InterPro" id="IPR032319">
    <property type="entry name" value="CLP1_P"/>
</dbReference>
<dbReference type="InterPro" id="IPR027417">
    <property type="entry name" value="P-loop_NTPase"/>
</dbReference>
<dbReference type="PANTHER" id="PTHR12755">
    <property type="entry name" value="CLEAVAGE/POLYADENYLATION FACTOR IA SUBUNIT CLP1P"/>
    <property type="match status" value="1"/>
</dbReference>
<dbReference type="PANTHER" id="PTHR12755:SF3">
    <property type="entry name" value="POLYNUCLEOTIDE 5'-HYDROXYL-KINASE NOL9"/>
    <property type="match status" value="1"/>
</dbReference>
<dbReference type="Pfam" id="PF16575">
    <property type="entry name" value="CLP1_P"/>
    <property type="match status" value="1"/>
</dbReference>
<keyword id="KW-0067">ATP-binding</keyword>
<keyword id="KW-0418">Kinase</keyword>
<keyword id="KW-0547">Nucleotide-binding</keyword>
<keyword id="KW-0539">Nucleus</keyword>
<keyword id="KW-1185">Reference proteome</keyword>
<keyword id="KW-0698">rRNA processing</keyword>
<keyword id="KW-0808">Transferase</keyword>
<name>GRC3_ASPOR</name>
<comment type="function">
    <text evidence="1">Polynucleotide 5'-kinase involved in rRNA processing.</text>
</comment>
<comment type="subcellular location">
    <subcellularLocation>
        <location evidence="1">Nucleus</location>
        <location evidence="1">Nucleolus</location>
    </subcellularLocation>
</comment>
<comment type="similarity">
    <text evidence="4">Belongs to the Clp1 family. NOL9/GRC3 subfamily.</text>
</comment>
<comment type="sequence caution" evidence="4">
    <conflict type="erroneous gene model prediction">
        <sequence resource="EMBL-CDS" id="BAE64991"/>
    </conflict>
</comment>